<evidence type="ECO:0000255" key="1">
    <source>
        <dbReference type="HAMAP-Rule" id="MF_00607"/>
    </source>
</evidence>
<proteinExistence type="inferred from homology"/>
<comment type="function">
    <text evidence="1">Specifically dimethylates two adjacent adenosines (A1518 and A1519) in the loop of a conserved hairpin near the 3'-end of 16S rRNA in the 30S particle. May play a critical role in biogenesis of 30S subunits.</text>
</comment>
<comment type="catalytic activity">
    <reaction evidence="1">
        <text>adenosine(1518)/adenosine(1519) in 16S rRNA + 4 S-adenosyl-L-methionine = N(6)-dimethyladenosine(1518)/N(6)-dimethyladenosine(1519) in 16S rRNA + 4 S-adenosyl-L-homocysteine + 4 H(+)</text>
        <dbReference type="Rhea" id="RHEA:19609"/>
        <dbReference type="Rhea" id="RHEA-COMP:10232"/>
        <dbReference type="Rhea" id="RHEA-COMP:10233"/>
        <dbReference type="ChEBI" id="CHEBI:15378"/>
        <dbReference type="ChEBI" id="CHEBI:57856"/>
        <dbReference type="ChEBI" id="CHEBI:59789"/>
        <dbReference type="ChEBI" id="CHEBI:74411"/>
        <dbReference type="ChEBI" id="CHEBI:74493"/>
        <dbReference type="EC" id="2.1.1.182"/>
    </reaction>
</comment>
<comment type="subcellular location">
    <subcellularLocation>
        <location evidence="1">Cytoplasm</location>
    </subcellularLocation>
</comment>
<comment type="similarity">
    <text evidence="1">Belongs to the class I-like SAM-binding methyltransferase superfamily. rRNA adenine N(6)-methyltransferase family. RsmA subfamily.</text>
</comment>
<sequence length="297" mass="33738">MLDNKDIATPSRTRALLDKYGFNFKKSLGQNFLIDVNIINNIIDASDIDAQTGVIEIGPGMGSLTEQLARHAKRVLAFEIDQRLIPVLNDTLSPYDNVTVINEDILKANIKEAVENHLQDCEKIMVVANLPYYITTPILLNLMQQDIPIDGYVVMMQKEVGERLNAEVGSKAYGSLSIVVQYYTETSKVLTVPKSVFMPPPNVDSIVVKLMQRTEPLVTVDNEEAFFKLAKAAFAQRRKTINNNYQNYFKDGKQHKEVILQWLEQAGIDPRRRGETLSIQDFAKLYEEKKKFPQLEN</sequence>
<protein>
    <recommendedName>
        <fullName evidence="1">Ribosomal RNA small subunit methyltransferase A</fullName>
        <ecNumber evidence="1">2.1.1.182</ecNumber>
    </recommendedName>
    <alternativeName>
        <fullName evidence="1">16S rRNA (adenine(1518)-N(6)/adenine(1519)-N(6))-dimethyltransferase</fullName>
    </alternativeName>
    <alternativeName>
        <fullName evidence="1">16S rRNA dimethyladenosine transferase</fullName>
    </alternativeName>
    <alternativeName>
        <fullName evidence="1">16S rRNA dimethylase</fullName>
    </alternativeName>
    <alternativeName>
        <fullName evidence="1">S-adenosylmethionine-6-N', N'-adenosyl(rRNA) dimethyltransferase</fullName>
    </alternativeName>
</protein>
<dbReference type="EC" id="2.1.1.182" evidence="1"/>
<dbReference type="EMBL" id="BA000017">
    <property type="protein sequence ID" value="BAB56655.2"/>
    <property type="molecule type" value="Genomic_DNA"/>
</dbReference>
<dbReference type="RefSeq" id="WP_000886500.1">
    <property type="nucleotide sequence ID" value="NC_002758.2"/>
</dbReference>
<dbReference type="SMR" id="Q932G1"/>
<dbReference type="KEGG" id="sav:SAV0493"/>
<dbReference type="HOGENOM" id="CLU_041220_0_0_9"/>
<dbReference type="PhylomeDB" id="Q932G1"/>
<dbReference type="Proteomes" id="UP000002481">
    <property type="component" value="Chromosome"/>
</dbReference>
<dbReference type="GO" id="GO:0005829">
    <property type="term" value="C:cytosol"/>
    <property type="evidence" value="ECO:0007669"/>
    <property type="project" value="TreeGrafter"/>
</dbReference>
<dbReference type="GO" id="GO:0052908">
    <property type="term" value="F:16S rRNA (adenine(1518)-N(6)/adenine(1519)-N(6))-dimethyltransferase activity"/>
    <property type="evidence" value="ECO:0007669"/>
    <property type="project" value="UniProtKB-EC"/>
</dbReference>
<dbReference type="GO" id="GO:0003723">
    <property type="term" value="F:RNA binding"/>
    <property type="evidence" value="ECO:0007669"/>
    <property type="project" value="UniProtKB-KW"/>
</dbReference>
<dbReference type="CDD" id="cd02440">
    <property type="entry name" value="AdoMet_MTases"/>
    <property type="match status" value="1"/>
</dbReference>
<dbReference type="FunFam" id="1.10.8.100:FF:000002">
    <property type="entry name" value="Ribosomal RNA small subunit methyltransferase A"/>
    <property type="match status" value="1"/>
</dbReference>
<dbReference type="FunFam" id="3.40.50.150:FF:000023">
    <property type="entry name" value="Ribosomal RNA small subunit methyltransferase A"/>
    <property type="match status" value="1"/>
</dbReference>
<dbReference type="Gene3D" id="1.10.8.100">
    <property type="entry name" value="Ribosomal RNA adenine dimethylase-like, domain 2"/>
    <property type="match status" value="1"/>
</dbReference>
<dbReference type="Gene3D" id="3.40.50.150">
    <property type="entry name" value="Vaccinia Virus protein VP39"/>
    <property type="match status" value="1"/>
</dbReference>
<dbReference type="HAMAP" id="MF_00607">
    <property type="entry name" value="16SrRNA_methyltr_A"/>
    <property type="match status" value="1"/>
</dbReference>
<dbReference type="InterPro" id="IPR001737">
    <property type="entry name" value="KsgA/Erm"/>
</dbReference>
<dbReference type="InterPro" id="IPR023165">
    <property type="entry name" value="rRNA_Ade_diMease-like_C"/>
</dbReference>
<dbReference type="InterPro" id="IPR020596">
    <property type="entry name" value="rRNA_Ade_Mease_Trfase_CS"/>
</dbReference>
<dbReference type="InterPro" id="IPR020598">
    <property type="entry name" value="rRNA_Ade_methylase_Trfase_N"/>
</dbReference>
<dbReference type="InterPro" id="IPR011530">
    <property type="entry name" value="rRNA_adenine_dimethylase"/>
</dbReference>
<dbReference type="InterPro" id="IPR029063">
    <property type="entry name" value="SAM-dependent_MTases_sf"/>
</dbReference>
<dbReference type="NCBIfam" id="TIGR00755">
    <property type="entry name" value="ksgA"/>
    <property type="match status" value="1"/>
</dbReference>
<dbReference type="PANTHER" id="PTHR11727">
    <property type="entry name" value="DIMETHYLADENOSINE TRANSFERASE"/>
    <property type="match status" value="1"/>
</dbReference>
<dbReference type="PANTHER" id="PTHR11727:SF7">
    <property type="entry name" value="DIMETHYLADENOSINE TRANSFERASE-RELATED"/>
    <property type="match status" value="1"/>
</dbReference>
<dbReference type="Pfam" id="PF00398">
    <property type="entry name" value="RrnaAD"/>
    <property type="match status" value="1"/>
</dbReference>
<dbReference type="SMART" id="SM00650">
    <property type="entry name" value="rADc"/>
    <property type="match status" value="1"/>
</dbReference>
<dbReference type="SUPFAM" id="SSF53335">
    <property type="entry name" value="S-adenosyl-L-methionine-dependent methyltransferases"/>
    <property type="match status" value="1"/>
</dbReference>
<dbReference type="PROSITE" id="PS01131">
    <property type="entry name" value="RRNA_A_DIMETH"/>
    <property type="match status" value="1"/>
</dbReference>
<dbReference type="PROSITE" id="PS51689">
    <property type="entry name" value="SAM_RNA_A_N6_MT"/>
    <property type="match status" value="1"/>
</dbReference>
<keyword id="KW-0963">Cytoplasm</keyword>
<keyword id="KW-0489">Methyltransferase</keyword>
<keyword id="KW-0694">RNA-binding</keyword>
<keyword id="KW-0698">rRNA processing</keyword>
<keyword id="KW-0949">S-adenosyl-L-methionine</keyword>
<keyword id="KW-0808">Transferase</keyword>
<reference key="1">
    <citation type="journal article" date="2001" name="Lancet">
        <title>Whole genome sequencing of meticillin-resistant Staphylococcus aureus.</title>
        <authorList>
            <person name="Kuroda M."/>
            <person name="Ohta T."/>
            <person name="Uchiyama I."/>
            <person name="Baba T."/>
            <person name="Yuzawa H."/>
            <person name="Kobayashi I."/>
            <person name="Cui L."/>
            <person name="Oguchi A."/>
            <person name="Aoki K."/>
            <person name="Nagai Y."/>
            <person name="Lian J.-Q."/>
            <person name="Ito T."/>
            <person name="Kanamori M."/>
            <person name="Matsumaru H."/>
            <person name="Maruyama A."/>
            <person name="Murakami H."/>
            <person name="Hosoyama A."/>
            <person name="Mizutani-Ui Y."/>
            <person name="Takahashi N.K."/>
            <person name="Sawano T."/>
            <person name="Inoue R."/>
            <person name="Kaito C."/>
            <person name="Sekimizu K."/>
            <person name="Hirakawa H."/>
            <person name="Kuhara S."/>
            <person name="Goto S."/>
            <person name="Yabuzaki J."/>
            <person name="Kanehisa M."/>
            <person name="Yamashita A."/>
            <person name="Oshima K."/>
            <person name="Furuya K."/>
            <person name="Yoshino C."/>
            <person name="Shiba T."/>
            <person name="Hattori M."/>
            <person name="Ogasawara N."/>
            <person name="Hayashi H."/>
            <person name="Hiramatsu K."/>
        </authorList>
    </citation>
    <scope>NUCLEOTIDE SEQUENCE [LARGE SCALE GENOMIC DNA]</scope>
    <source>
        <strain>Mu50 / ATCC 700699</strain>
    </source>
</reference>
<reference key="2">
    <citation type="journal article" date="2004" name="DNA Res.">
        <title>Nucleotide substitutions in Staphylococcus aureus strains, Mu50, Mu3, and N315.</title>
        <authorList>
            <person name="Ohta T."/>
            <person name="Hirakawa H."/>
            <person name="Morikawa K."/>
            <person name="Maruyama A."/>
            <person name="Inose Y."/>
            <person name="Yamashita A."/>
            <person name="Oshima K."/>
            <person name="Kuroda M."/>
            <person name="Hattori M."/>
            <person name="Hiramatsu K."/>
            <person name="Kuhara S."/>
            <person name="Hayashi H."/>
        </authorList>
    </citation>
    <scope>SEQUENCE REVISION</scope>
</reference>
<accession>Q932G1</accession>
<organism>
    <name type="scientific">Staphylococcus aureus (strain Mu50 / ATCC 700699)</name>
    <dbReference type="NCBI Taxonomy" id="158878"/>
    <lineage>
        <taxon>Bacteria</taxon>
        <taxon>Bacillati</taxon>
        <taxon>Bacillota</taxon>
        <taxon>Bacilli</taxon>
        <taxon>Bacillales</taxon>
        <taxon>Staphylococcaceae</taxon>
        <taxon>Staphylococcus</taxon>
    </lineage>
</organism>
<name>RSMA_STAAM</name>
<gene>
    <name evidence="1" type="primary">rsmA</name>
    <name evidence="1" type="synonym">ksgA</name>
    <name type="ordered locus">SAV0493</name>
</gene>
<feature type="chain" id="PRO_0000101604" description="Ribosomal RNA small subunit methyltransferase A">
    <location>
        <begin position="1"/>
        <end position="297"/>
    </location>
</feature>
<feature type="binding site" evidence="1">
    <location>
        <position position="31"/>
    </location>
    <ligand>
        <name>S-adenosyl-L-methionine</name>
        <dbReference type="ChEBI" id="CHEBI:59789"/>
    </ligand>
</feature>
<feature type="binding site" evidence="1">
    <location>
        <position position="33"/>
    </location>
    <ligand>
        <name>S-adenosyl-L-methionine</name>
        <dbReference type="ChEBI" id="CHEBI:59789"/>
    </ligand>
</feature>
<feature type="binding site" evidence="1">
    <location>
        <position position="58"/>
    </location>
    <ligand>
        <name>S-adenosyl-L-methionine</name>
        <dbReference type="ChEBI" id="CHEBI:59789"/>
    </ligand>
</feature>
<feature type="binding site" evidence="1">
    <location>
        <position position="79"/>
    </location>
    <ligand>
        <name>S-adenosyl-L-methionine</name>
        <dbReference type="ChEBI" id="CHEBI:59789"/>
    </ligand>
</feature>
<feature type="binding site" evidence="1">
    <location>
        <position position="104"/>
    </location>
    <ligand>
        <name>S-adenosyl-L-methionine</name>
        <dbReference type="ChEBI" id="CHEBI:59789"/>
    </ligand>
</feature>
<feature type="binding site" evidence="1">
    <location>
        <position position="129"/>
    </location>
    <ligand>
        <name>S-adenosyl-L-methionine</name>
        <dbReference type="ChEBI" id="CHEBI:59789"/>
    </ligand>
</feature>